<feature type="chain" id="PRO_0000210528" description="Uncharacterized protein MG314">
    <location>
        <begin position="1"/>
        <end position="443"/>
    </location>
</feature>
<keyword id="KW-1185">Reference proteome</keyword>
<protein>
    <recommendedName>
        <fullName>Uncharacterized protein MG314</fullName>
    </recommendedName>
</protein>
<organism>
    <name type="scientific">Mycoplasma genitalium (strain ATCC 33530 / DSM 19775 / NCTC 10195 / G37)</name>
    <name type="common">Mycoplasmoides genitalium</name>
    <dbReference type="NCBI Taxonomy" id="243273"/>
    <lineage>
        <taxon>Bacteria</taxon>
        <taxon>Bacillati</taxon>
        <taxon>Mycoplasmatota</taxon>
        <taxon>Mycoplasmoidales</taxon>
        <taxon>Mycoplasmoidaceae</taxon>
        <taxon>Mycoplasmoides</taxon>
    </lineage>
</organism>
<name>Y314_MYCGE</name>
<gene>
    <name type="ordered locus">MG314</name>
</gene>
<proteinExistence type="predicted"/>
<accession>Q49415</accession>
<accession>Q49279</accession>
<dbReference type="EMBL" id="L43967">
    <property type="protein sequence ID" value="AAC71536.1"/>
    <property type="molecule type" value="Genomic_DNA"/>
</dbReference>
<dbReference type="EMBL" id="U02151">
    <property type="protein sequence ID" value="AAD12432.1"/>
    <property type="molecule type" value="Genomic_DNA"/>
</dbReference>
<dbReference type="PIR" id="G64234">
    <property type="entry name" value="G64234"/>
</dbReference>
<dbReference type="RefSeq" id="WP_009885988.1">
    <property type="nucleotide sequence ID" value="NC_000908.2"/>
</dbReference>
<dbReference type="STRING" id="243273.MG_314"/>
<dbReference type="GeneID" id="88282477"/>
<dbReference type="KEGG" id="mge:MG_314"/>
<dbReference type="HOGENOM" id="CLU_617935_0_0_14"/>
<dbReference type="InParanoid" id="Q49415"/>
<dbReference type="OrthoDB" id="399084at2"/>
<dbReference type="BioCyc" id="MGEN243273:G1GJ2-383-MONOMER"/>
<dbReference type="Proteomes" id="UP000000807">
    <property type="component" value="Chromosome"/>
</dbReference>
<dbReference type="NCBIfam" id="NF045753">
    <property type="entry name" value="MPN449"/>
    <property type="match status" value="1"/>
</dbReference>
<reference key="1">
    <citation type="journal article" date="1995" name="Science">
        <title>The minimal gene complement of Mycoplasma genitalium.</title>
        <authorList>
            <person name="Fraser C.M."/>
            <person name="Gocayne J.D."/>
            <person name="White O."/>
            <person name="Adams M.D."/>
            <person name="Clayton R.A."/>
            <person name="Fleischmann R.D."/>
            <person name="Bult C.J."/>
            <person name="Kerlavage A.R."/>
            <person name="Sutton G.G."/>
            <person name="Kelley J.M."/>
            <person name="Fritchman J.L."/>
            <person name="Weidman J.F."/>
            <person name="Small K.V."/>
            <person name="Sandusky M."/>
            <person name="Fuhrmann J.L."/>
            <person name="Nguyen D.T."/>
            <person name="Utterback T.R."/>
            <person name="Saudek D.M."/>
            <person name="Phillips C.A."/>
            <person name="Merrick J.M."/>
            <person name="Tomb J.-F."/>
            <person name="Dougherty B.A."/>
            <person name="Bott K.F."/>
            <person name="Hu P.-C."/>
            <person name="Lucier T.S."/>
            <person name="Peterson S.N."/>
            <person name="Smith H.O."/>
            <person name="Hutchison C.A. III"/>
            <person name="Venter J.C."/>
        </authorList>
    </citation>
    <scope>NUCLEOTIDE SEQUENCE [LARGE SCALE GENOMIC DNA]</scope>
    <source>
        <strain>ATCC 33530 / DSM 19775 / NCTC 10195 / G37</strain>
    </source>
</reference>
<reference key="2">
    <citation type="journal article" date="1993" name="J. Bacteriol.">
        <title>A survey of the Mycoplasma genitalium genome by using random sequencing.</title>
        <authorList>
            <person name="Peterson S.N."/>
            <person name="Hu P.-C."/>
            <person name="Bott K.F."/>
            <person name="Hutchison C.A. III"/>
        </authorList>
    </citation>
    <scope>NUCLEOTIDE SEQUENCE [GENOMIC DNA] OF 70-171</scope>
    <source>
        <strain>ATCC 33530 / DSM 19775 / NCTC 10195 / G37</strain>
    </source>
</reference>
<sequence length="443" mass="51132">MTFSEILTKVQNNLDIVFNNETLRTRIKTDSDFAKTILAQLKLLYFLEEKQKRVKTKKPDHFLFGSFHDKFIQLGQNQLSEKELKAAKFDLTDALDLANYLNVAVKNLFNKELNSFTKLAETQVKPVSELQENNKTVKDNPSFQTINNSQQLNSGLENNILQQTLQVRARDRAFGRFTSEKLVGKIFEFQFKSQWIKWAQLAIFISMIAIFFISIAYVVMVNVFFTHFVDKNSPLFNVNNDQNTVQQSNADTTNLNRFFALSSSNLITMIFLAFGGASFFFAFQGKPYSFATRGQTNRAMRYLRSEFGVKEFPKINDNYRYKVRIKWIFWTIFIFVFLNCIPGNIVRSGFWNAALIIRLFSENQLISVSPLFASYLIGIAWLFVFSIVPFSIISVIAFSLSPKLNLEQTNEIFNKYFQEELAKPITSDESKTTLDIPPPTIFG</sequence>